<gene>
    <name evidence="2" type="primary">HIKESHI</name>
</gene>
<reference key="1">
    <citation type="submission" date="2005-01" db="EMBL/GenBank/DDBJ databases">
        <title>Analysis of sequences obtained from constructed full-length bovine cDNA libraries.</title>
        <authorList>
            <person name="Yu J."/>
            <person name="Meng Y."/>
            <person name="Wang Z."/>
            <person name="Hansen C."/>
            <person name="Li C."/>
            <person name="Moore S.S."/>
        </authorList>
    </citation>
    <scope>NUCLEOTIDE SEQUENCE [LARGE SCALE MRNA]</scope>
    <source>
        <tissue>Lymphoid epithelium</tissue>
    </source>
</reference>
<reference key="2">
    <citation type="submission" date="2005-08" db="EMBL/GenBank/DDBJ databases">
        <authorList>
            <consortium name="NIH - Mammalian Gene Collection (MGC) project"/>
        </authorList>
    </citation>
    <scope>NUCLEOTIDE SEQUENCE [LARGE SCALE MRNA]</scope>
    <source>
        <strain>Hereford</strain>
        <tissue>Heart ventricle</tissue>
    </source>
</reference>
<organism>
    <name type="scientific">Bos taurus</name>
    <name type="common">Bovine</name>
    <dbReference type="NCBI Taxonomy" id="9913"/>
    <lineage>
        <taxon>Eukaryota</taxon>
        <taxon>Metazoa</taxon>
        <taxon>Chordata</taxon>
        <taxon>Craniata</taxon>
        <taxon>Vertebrata</taxon>
        <taxon>Euteleostomi</taxon>
        <taxon>Mammalia</taxon>
        <taxon>Eutheria</taxon>
        <taxon>Laurasiatheria</taxon>
        <taxon>Artiodactyla</taxon>
        <taxon>Ruminantia</taxon>
        <taxon>Pecora</taxon>
        <taxon>Bovidae</taxon>
        <taxon>Bovinae</taxon>
        <taxon>Bos</taxon>
    </lineage>
</organism>
<evidence type="ECO:0000250" key="1"/>
<evidence type="ECO:0000250" key="2">
    <source>
        <dbReference type="UniProtKB" id="Q53FT3"/>
    </source>
</evidence>
<evidence type="ECO:0000250" key="3">
    <source>
        <dbReference type="UniProtKB" id="Q9DD02"/>
    </source>
</evidence>
<evidence type="ECO:0000305" key="4"/>
<accession>Q56JY0</accession>
<feature type="chain" id="PRO_0000245261" description="Protein Hikeshi">
    <location>
        <begin position="1"/>
        <end position="197"/>
    </location>
</feature>
<feature type="region of interest" description="Required for F-X-F-G repeats-nucleoporins recognition and nuclear import" evidence="2">
    <location>
        <begin position="18"/>
        <end position="55"/>
    </location>
</feature>
<feature type="region of interest" description="Flexible linker region involved in nuclear import of HSP70 proteins" evidence="2">
    <location>
        <begin position="124"/>
        <end position="134"/>
    </location>
</feature>
<dbReference type="EMBL" id="AY911348">
    <property type="protein sequence ID" value="AAW82115.1"/>
    <property type="molecule type" value="mRNA"/>
</dbReference>
<dbReference type="EMBL" id="BC103227">
    <property type="protein sequence ID" value="AAI03228.1"/>
    <property type="molecule type" value="mRNA"/>
</dbReference>
<dbReference type="RefSeq" id="NP_001029398.1">
    <property type="nucleotide sequence ID" value="NM_001034226.2"/>
</dbReference>
<dbReference type="SMR" id="Q56JY0"/>
<dbReference type="FunCoup" id="Q56JY0">
    <property type="interactions" value="3217"/>
</dbReference>
<dbReference type="STRING" id="9913.ENSBTAP00000026632"/>
<dbReference type="PaxDb" id="9913-ENSBTAP00000026632"/>
<dbReference type="PeptideAtlas" id="Q56JY0"/>
<dbReference type="Ensembl" id="ENSBTAT00000026632.5">
    <property type="protein sequence ID" value="ENSBTAP00000026632.3"/>
    <property type="gene ID" value="ENSBTAG00000019995.5"/>
</dbReference>
<dbReference type="GeneID" id="504867"/>
<dbReference type="KEGG" id="bta:504867"/>
<dbReference type="CTD" id="51501"/>
<dbReference type="VEuPathDB" id="HostDB:ENSBTAG00000019995"/>
<dbReference type="VGNC" id="VGNC:29853">
    <property type="gene designation" value="HIKESHI"/>
</dbReference>
<dbReference type="eggNOG" id="KOG4067">
    <property type="taxonomic scope" value="Eukaryota"/>
</dbReference>
<dbReference type="GeneTree" id="ENSGT00390000004056"/>
<dbReference type="HOGENOM" id="CLU_084839_2_0_1"/>
<dbReference type="InParanoid" id="Q56JY0"/>
<dbReference type="OMA" id="WWAKFER"/>
<dbReference type="OrthoDB" id="10248398at2759"/>
<dbReference type="TreeFam" id="TF313222"/>
<dbReference type="Reactome" id="R-BTA-3371453">
    <property type="pathway name" value="Regulation of HSF1-mediated heat shock response"/>
</dbReference>
<dbReference type="Proteomes" id="UP000009136">
    <property type="component" value="Chromosome 29"/>
</dbReference>
<dbReference type="Bgee" id="ENSBTAG00000019995">
    <property type="expression patterns" value="Expressed in semimembranosus muscle and 108 other cell types or tissues"/>
</dbReference>
<dbReference type="GO" id="GO:0005829">
    <property type="term" value="C:cytosol"/>
    <property type="evidence" value="ECO:0000250"/>
    <property type="project" value="UniProtKB"/>
</dbReference>
<dbReference type="GO" id="GO:0016607">
    <property type="term" value="C:nuclear speck"/>
    <property type="evidence" value="ECO:0007669"/>
    <property type="project" value="Ensembl"/>
</dbReference>
<dbReference type="GO" id="GO:0005634">
    <property type="term" value="C:nucleus"/>
    <property type="evidence" value="ECO:0000250"/>
    <property type="project" value="UniProtKB"/>
</dbReference>
<dbReference type="GO" id="GO:0030544">
    <property type="term" value="F:Hsp70 protein binding"/>
    <property type="evidence" value="ECO:0000250"/>
    <property type="project" value="UniProtKB"/>
</dbReference>
<dbReference type="GO" id="GO:0061608">
    <property type="term" value="F:nuclear import signal receptor activity"/>
    <property type="evidence" value="ECO:0000318"/>
    <property type="project" value="GO_Central"/>
</dbReference>
<dbReference type="GO" id="GO:0034605">
    <property type="term" value="P:cellular response to heat"/>
    <property type="evidence" value="ECO:0000250"/>
    <property type="project" value="UniProtKB"/>
</dbReference>
<dbReference type="GO" id="GO:0007030">
    <property type="term" value="P:Golgi organization"/>
    <property type="evidence" value="ECO:0007669"/>
    <property type="project" value="Ensembl"/>
</dbReference>
<dbReference type="GO" id="GO:0030324">
    <property type="term" value="P:lung development"/>
    <property type="evidence" value="ECO:0007669"/>
    <property type="project" value="Ensembl"/>
</dbReference>
<dbReference type="GO" id="GO:0006606">
    <property type="term" value="P:protein import into nucleus"/>
    <property type="evidence" value="ECO:0000250"/>
    <property type="project" value="UniProtKB"/>
</dbReference>
<dbReference type="GO" id="GO:0015031">
    <property type="term" value="P:protein transport"/>
    <property type="evidence" value="ECO:0000250"/>
    <property type="project" value="UniProtKB"/>
</dbReference>
<dbReference type="InterPro" id="IPR048364">
    <property type="entry name" value="Hikeshi-like_C"/>
</dbReference>
<dbReference type="InterPro" id="IPR008493">
    <property type="entry name" value="Hikeshi-like_N"/>
</dbReference>
<dbReference type="InterPro" id="IPR031318">
    <property type="entry name" value="OPI10"/>
</dbReference>
<dbReference type="PANTHER" id="PTHR12925">
    <property type="entry name" value="HIKESHI FAMILY MEMBER"/>
    <property type="match status" value="1"/>
</dbReference>
<dbReference type="PANTHER" id="PTHR12925:SF0">
    <property type="entry name" value="PROTEIN HIKESHI"/>
    <property type="match status" value="1"/>
</dbReference>
<dbReference type="Pfam" id="PF21057">
    <property type="entry name" value="Hikeshi-like_C"/>
    <property type="match status" value="1"/>
</dbReference>
<dbReference type="Pfam" id="PF05603">
    <property type="entry name" value="Hikeshi-like_N"/>
    <property type="match status" value="1"/>
</dbReference>
<comment type="function">
    <text evidence="1">Acts as a specific nuclear import carrier for HSP70 proteins following heat-shock stress: acts by mediating the nucleoporin-dependent translocation of ATP-bound HSP70 proteins into the nucleus. HSP70 proteins import is required to protect cells from heat shock damages. Does not translocate ADP-bound HSP70 proteins into the nucleus (By similarity).</text>
</comment>
<comment type="subunit">
    <text evidence="2">Forms an asymmetric homodimer; required for binding and nuclear import of HSP70 proteins. Interacts with ATP-bound HSP70 proteins. Interacts with NUP62 and NUP153 (via F-X-F-G repeats). Interacts with HSPA8.</text>
</comment>
<comment type="subcellular location">
    <subcellularLocation>
        <location evidence="3">Cytoplasm</location>
    </subcellularLocation>
    <subcellularLocation>
        <location evidence="2">Cytoplasm</location>
        <location evidence="2">Cytosol</location>
    </subcellularLocation>
    <subcellularLocation>
        <location evidence="2">Nucleus</location>
    </subcellularLocation>
</comment>
<comment type="similarity">
    <text evidence="4">Belongs to the OPI10 family.</text>
</comment>
<sequence length="197" mass="21653">MFGCLVAGRLVQTAAQQVAEDKFVFDLPDYENINHVVVFMLGTVPFPEGMGGSVYFSYPDSNGMPVWQLLGFVTNGKPSAIFKISGLKSGEGSQHPFGTMNIVRTPSVAQIGISVELLDSLAQQTPVGNAAVSSVDSFTQFTQKMLDNFYNFASSFAVSQAQMTPSPSEMFIPANVVLKWYENFQRRLAQNPLFWKT</sequence>
<protein>
    <recommendedName>
        <fullName evidence="2">Protein Hikeshi</fullName>
    </recommendedName>
</protein>
<keyword id="KW-0963">Cytoplasm</keyword>
<keyword id="KW-0539">Nucleus</keyword>
<keyword id="KW-0653">Protein transport</keyword>
<keyword id="KW-1185">Reference proteome</keyword>
<keyword id="KW-0813">Transport</keyword>
<name>HIKES_BOVIN</name>
<proteinExistence type="evidence at transcript level"/>